<name>SPEE_SYNP6</name>
<organism>
    <name type="scientific">Synechococcus sp. (strain ATCC 27144 / PCC 6301 / SAUG 1402/1)</name>
    <name type="common">Anacystis nidulans</name>
    <dbReference type="NCBI Taxonomy" id="269084"/>
    <lineage>
        <taxon>Bacteria</taxon>
        <taxon>Bacillati</taxon>
        <taxon>Cyanobacteriota</taxon>
        <taxon>Cyanophyceae</taxon>
        <taxon>Synechococcales</taxon>
        <taxon>Synechococcaceae</taxon>
        <taxon>Synechococcus</taxon>
    </lineage>
</organism>
<dbReference type="EC" id="2.5.1.16" evidence="1"/>
<dbReference type="EMBL" id="AP008231">
    <property type="protein sequence ID" value="BAD79086.1"/>
    <property type="molecule type" value="Genomic_DNA"/>
</dbReference>
<dbReference type="RefSeq" id="WP_011243208.1">
    <property type="nucleotide sequence ID" value="NZ_CP085785.1"/>
</dbReference>
<dbReference type="SMR" id="Q5N3N4"/>
<dbReference type="GeneID" id="72429461"/>
<dbReference type="KEGG" id="syc:syc0896_c"/>
<dbReference type="eggNOG" id="COG0421">
    <property type="taxonomic scope" value="Bacteria"/>
</dbReference>
<dbReference type="UniPathway" id="UPA00248">
    <property type="reaction ID" value="UER00314"/>
</dbReference>
<dbReference type="Proteomes" id="UP000001175">
    <property type="component" value="Chromosome"/>
</dbReference>
<dbReference type="GO" id="GO:0005737">
    <property type="term" value="C:cytoplasm"/>
    <property type="evidence" value="ECO:0007669"/>
    <property type="project" value="UniProtKB-SubCell"/>
</dbReference>
<dbReference type="GO" id="GO:0004766">
    <property type="term" value="F:spermidine synthase activity"/>
    <property type="evidence" value="ECO:0007669"/>
    <property type="project" value="UniProtKB-UniRule"/>
</dbReference>
<dbReference type="GO" id="GO:0008295">
    <property type="term" value="P:spermidine biosynthetic process"/>
    <property type="evidence" value="ECO:0007669"/>
    <property type="project" value="UniProtKB-UniRule"/>
</dbReference>
<dbReference type="CDD" id="cd02440">
    <property type="entry name" value="AdoMet_MTases"/>
    <property type="match status" value="1"/>
</dbReference>
<dbReference type="Gene3D" id="2.30.140.10">
    <property type="entry name" value="Spermidine synthase, tetramerisation domain"/>
    <property type="match status" value="1"/>
</dbReference>
<dbReference type="Gene3D" id="3.40.50.150">
    <property type="entry name" value="Vaccinia Virus protein VP39"/>
    <property type="match status" value="1"/>
</dbReference>
<dbReference type="HAMAP" id="MF_00198">
    <property type="entry name" value="Spermidine_synth"/>
    <property type="match status" value="1"/>
</dbReference>
<dbReference type="InterPro" id="IPR030374">
    <property type="entry name" value="PABS"/>
</dbReference>
<dbReference type="InterPro" id="IPR030373">
    <property type="entry name" value="PABS_CS"/>
</dbReference>
<dbReference type="InterPro" id="IPR029063">
    <property type="entry name" value="SAM-dependent_MTases_sf"/>
</dbReference>
<dbReference type="InterPro" id="IPR001045">
    <property type="entry name" value="Spermi_synthase"/>
</dbReference>
<dbReference type="InterPro" id="IPR035246">
    <property type="entry name" value="Spermidine_synt_N"/>
</dbReference>
<dbReference type="InterPro" id="IPR037163">
    <property type="entry name" value="Spermidine_synt_N_sf"/>
</dbReference>
<dbReference type="NCBIfam" id="NF002010">
    <property type="entry name" value="PRK00811.1"/>
    <property type="match status" value="1"/>
</dbReference>
<dbReference type="PANTHER" id="PTHR11558:SF11">
    <property type="entry name" value="SPERMIDINE SYNTHASE"/>
    <property type="match status" value="1"/>
</dbReference>
<dbReference type="PANTHER" id="PTHR11558">
    <property type="entry name" value="SPERMIDINE/SPERMINE SYNTHASE"/>
    <property type="match status" value="1"/>
</dbReference>
<dbReference type="Pfam" id="PF17284">
    <property type="entry name" value="Spermine_synt_N"/>
    <property type="match status" value="1"/>
</dbReference>
<dbReference type="Pfam" id="PF01564">
    <property type="entry name" value="Spermine_synth"/>
    <property type="match status" value="1"/>
</dbReference>
<dbReference type="SUPFAM" id="SSF53335">
    <property type="entry name" value="S-adenosyl-L-methionine-dependent methyltransferases"/>
    <property type="match status" value="1"/>
</dbReference>
<dbReference type="PROSITE" id="PS01330">
    <property type="entry name" value="PABS_1"/>
    <property type="match status" value="1"/>
</dbReference>
<dbReference type="PROSITE" id="PS51006">
    <property type="entry name" value="PABS_2"/>
    <property type="match status" value="1"/>
</dbReference>
<feature type="chain" id="PRO_1000197480" description="Polyamine aminopropyltransferase">
    <location>
        <begin position="1"/>
        <end position="286"/>
    </location>
</feature>
<feature type="domain" description="PABS" evidence="1">
    <location>
        <begin position="6"/>
        <end position="239"/>
    </location>
</feature>
<feature type="active site" description="Proton acceptor" evidence="1">
    <location>
        <position position="159"/>
    </location>
</feature>
<feature type="binding site" evidence="1">
    <location>
        <position position="34"/>
    </location>
    <ligand>
        <name>S-methyl-5'-thioadenosine</name>
        <dbReference type="ChEBI" id="CHEBI:17509"/>
    </ligand>
</feature>
<feature type="binding site" evidence="1">
    <location>
        <position position="65"/>
    </location>
    <ligand>
        <name>spermidine</name>
        <dbReference type="ChEBI" id="CHEBI:57834"/>
    </ligand>
</feature>
<feature type="binding site" evidence="1">
    <location>
        <position position="89"/>
    </location>
    <ligand>
        <name>spermidine</name>
        <dbReference type="ChEBI" id="CHEBI:57834"/>
    </ligand>
</feature>
<feature type="binding site" evidence="1">
    <location>
        <position position="109"/>
    </location>
    <ligand>
        <name>S-methyl-5'-thioadenosine</name>
        <dbReference type="ChEBI" id="CHEBI:17509"/>
    </ligand>
</feature>
<feature type="binding site" evidence="1">
    <location>
        <begin position="140"/>
        <end position="141"/>
    </location>
    <ligand>
        <name>S-methyl-5'-thioadenosine</name>
        <dbReference type="ChEBI" id="CHEBI:17509"/>
    </ligand>
</feature>
<feature type="binding site" evidence="1">
    <location>
        <position position="166"/>
    </location>
    <ligand>
        <name>S-methyl-5'-thioadenosine</name>
        <dbReference type="ChEBI" id="CHEBI:17509"/>
    </ligand>
</feature>
<reference key="1">
    <citation type="journal article" date="2007" name="Photosyn. Res.">
        <title>Complete nucleotide sequence of the freshwater unicellular cyanobacterium Synechococcus elongatus PCC 6301 chromosome: gene content and organization.</title>
        <authorList>
            <person name="Sugita C."/>
            <person name="Ogata K."/>
            <person name="Shikata M."/>
            <person name="Jikuya H."/>
            <person name="Takano J."/>
            <person name="Furumichi M."/>
            <person name="Kanehisa M."/>
            <person name="Omata T."/>
            <person name="Sugiura M."/>
            <person name="Sugita M."/>
        </authorList>
    </citation>
    <scope>NUCLEOTIDE SEQUENCE [LARGE SCALE GENOMIC DNA]</scope>
    <source>
        <strain>ATCC 27144 / PCC 6301 / SAUG 1402/1</strain>
    </source>
</reference>
<accession>Q5N3N4</accession>
<keyword id="KW-0963">Cytoplasm</keyword>
<keyword id="KW-0620">Polyamine biosynthesis</keyword>
<keyword id="KW-0745">Spermidine biosynthesis</keyword>
<keyword id="KW-0808">Transferase</keyword>
<gene>
    <name evidence="1" type="primary">speE</name>
    <name type="ordered locus">syc0896_c</name>
</gene>
<comment type="function">
    <text evidence="1">Catalyzes the irreversible transfer of a propylamine group from the amino donor S-adenosylmethioninamine (decarboxy-AdoMet) to putrescine (1,4-diaminobutane) to yield spermidine.</text>
</comment>
<comment type="catalytic activity">
    <reaction evidence="1">
        <text>S-adenosyl 3-(methylsulfanyl)propylamine + putrescine = S-methyl-5'-thioadenosine + spermidine + H(+)</text>
        <dbReference type="Rhea" id="RHEA:12721"/>
        <dbReference type="ChEBI" id="CHEBI:15378"/>
        <dbReference type="ChEBI" id="CHEBI:17509"/>
        <dbReference type="ChEBI" id="CHEBI:57443"/>
        <dbReference type="ChEBI" id="CHEBI:57834"/>
        <dbReference type="ChEBI" id="CHEBI:326268"/>
        <dbReference type="EC" id="2.5.1.16"/>
    </reaction>
</comment>
<comment type="pathway">
    <text evidence="1">Amine and polyamine biosynthesis; spermidine biosynthesis; spermidine from putrescine: step 1/1.</text>
</comment>
<comment type="subunit">
    <text evidence="1">Homodimer or homotetramer.</text>
</comment>
<comment type="subcellular location">
    <subcellularLocation>
        <location evidence="1">Cytoplasm</location>
    </subcellularLocation>
</comment>
<comment type="similarity">
    <text evidence="1">Belongs to the spermidine/spermine synthase family.</text>
</comment>
<sequence>MSADAPVWIDEVFEDRVRYGLRGQILWEETSPFQKITIVDTEHYGRGLLLDDCWMTAERCEVCYHEYLVHPPLTTAASIARVLVIGGGDGGTVREVLRYAEVEQVDLVEIDGRVVELSQEYLGAIGTAWADPRLNVKIGDGIAFVQTAPDASYDVILVDGSDPAGPAAGLFNREFYENCRRVLKPGGVFASQAESPDSFLAVHLEMIETLSAVFAEAKPYYGWVPMYPSGWWSWLYASDTPGQFQKPQSDRLAAIEPQVEIYNRDIHQAAFAQPNFVRRGLSARQG</sequence>
<proteinExistence type="inferred from homology"/>
<protein>
    <recommendedName>
        <fullName evidence="1">Polyamine aminopropyltransferase</fullName>
    </recommendedName>
    <alternativeName>
        <fullName evidence="1">Putrescine aminopropyltransferase</fullName>
        <shortName evidence="1">PAPT</shortName>
    </alternativeName>
    <alternativeName>
        <fullName evidence="1">Spermidine synthase</fullName>
        <shortName evidence="1">SPDS</shortName>
        <shortName evidence="1">SPDSY</shortName>
        <ecNumber evidence="1">2.5.1.16</ecNumber>
    </alternativeName>
</protein>
<evidence type="ECO:0000255" key="1">
    <source>
        <dbReference type="HAMAP-Rule" id="MF_00198"/>
    </source>
</evidence>